<gene>
    <name type="primary">nrdG</name>
    <name type="synonym">yjgE</name>
    <name type="ordered locus">b4237</name>
    <name type="ordered locus">JW4196</name>
</gene>
<sequence>MNYHQYYPVDIVNGPGTRCTLFVSGCVHECPGCYNKSTWRVNSGQPFTKAMEDQIINDLNDTRIKRQGISLSGGDPLHPQNVPDILKLVQRIRAECPGKDIWVWTGYKLDELNAAQMQVVDLINVLVDGKFVQDLKDPSLIWRGSSNQVVHHLR</sequence>
<evidence type="ECO:0000250" key="1">
    <source>
        <dbReference type="UniProtKB" id="P0A9N4"/>
    </source>
</evidence>
<evidence type="ECO:0000269" key="2">
    <source>
    </source>
</evidence>
<evidence type="ECO:0000269" key="3">
    <source>
    </source>
</evidence>
<evidence type="ECO:0000269" key="4">
    <source>
    </source>
</evidence>
<evidence type="ECO:0000269" key="5">
    <source>
    </source>
</evidence>
<evidence type="ECO:0000269" key="6">
    <source>
    </source>
</evidence>
<evidence type="ECO:0000269" key="7">
    <source>
    </source>
</evidence>
<evidence type="ECO:0000305" key="8"/>
<evidence type="ECO:0000305" key="9">
    <source>
    </source>
</evidence>
<protein>
    <recommendedName>
        <fullName evidence="8">Anaerobic ribonucleoside-triphosphate reductase-activating protein</fullName>
        <ecNumber evidence="7">1.97.1.-</ecNumber>
    </recommendedName>
    <alternativeName>
        <fullName evidence="8">Class III anaerobic ribonucleotide reductase small component</fullName>
    </alternativeName>
</protein>
<feature type="chain" id="PRO_0000200535" description="Anaerobic ribonucleoside-triphosphate reductase-activating protein">
    <location>
        <begin position="1"/>
        <end position="154"/>
    </location>
</feature>
<feature type="binding site" evidence="9">
    <location>
        <position position="26"/>
    </location>
    <ligand>
        <name>[4Fe-4S] cluster</name>
        <dbReference type="ChEBI" id="CHEBI:49883"/>
        <note>4Fe-4S-S-AdoMet</note>
    </ligand>
</feature>
<feature type="binding site" evidence="9">
    <location>
        <position position="30"/>
    </location>
    <ligand>
        <name>[4Fe-4S] cluster</name>
        <dbReference type="ChEBI" id="CHEBI:49883"/>
        <note>4Fe-4S-S-AdoMet</note>
    </ligand>
</feature>
<feature type="binding site" evidence="1">
    <location>
        <begin position="32"/>
        <end position="34"/>
    </location>
    <ligand>
        <name>S-adenosyl-L-methionine</name>
        <dbReference type="ChEBI" id="CHEBI:59789"/>
    </ligand>
</feature>
<feature type="binding site" evidence="9">
    <location>
        <position position="33"/>
    </location>
    <ligand>
        <name>[4Fe-4S] cluster</name>
        <dbReference type="ChEBI" id="CHEBI:49883"/>
        <note>4Fe-4S-S-AdoMet</note>
    </ligand>
</feature>
<feature type="binding site" evidence="1">
    <location>
        <position position="74"/>
    </location>
    <ligand>
        <name>S-adenosyl-L-methionine</name>
        <dbReference type="ChEBI" id="CHEBI:59789"/>
    </ligand>
</feature>
<feature type="mutagenesis site" description="No change in activity. Does not affect iron and sulfide content." evidence="2">
    <original>C</original>
    <variation>A</variation>
    <location>
        <position position="19"/>
    </location>
</feature>
<feature type="mutagenesis site" description="Loss of activity. Decrease in iron and sulfide content." evidence="2">
    <original>C</original>
    <variation>A</variation>
    <location>
        <position position="26"/>
    </location>
</feature>
<feature type="mutagenesis site" description="Loss of activity. Decrease in iron and sulfide content." evidence="2">
    <original>C</original>
    <variation>A</variation>
    <location>
        <position position="30"/>
    </location>
</feature>
<feature type="mutagenesis site" description="Loss of activity. Decrease in iron and sulfide content." evidence="2">
    <original>C</original>
    <variation>A</variation>
    <location>
        <position position="33"/>
    </location>
</feature>
<feature type="mutagenesis site" description="No change in activity. Does not affect iron and sulfide content." evidence="2">
    <original>C</original>
    <variation>A</variation>
    <location>
        <position position="96"/>
    </location>
</feature>
<name>NRDG_ECOLI</name>
<proteinExistence type="evidence at protein level"/>
<dbReference type="EC" id="1.97.1.-" evidence="7"/>
<dbReference type="EMBL" id="Z46865">
    <property type="protein sequence ID" value="CAA86937.1"/>
    <property type="molecule type" value="Genomic_DNA"/>
</dbReference>
<dbReference type="EMBL" id="U14003">
    <property type="protein sequence ID" value="AAA97134.1"/>
    <property type="molecule type" value="Genomic_DNA"/>
</dbReference>
<dbReference type="EMBL" id="U00096">
    <property type="protein sequence ID" value="AAC77194.1"/>
    <property type="molecule type" value="Genomic_DNA"/>
</dbReference>
<dbReference type="EMBL" id="AP009048">
    <property type="protein sequence ID" value="BAE78236.1"/>
    <property type="molecule type" value="Genomic_DNA"/>
</dbReference>
<dbReference type="PIR" id="A55692">
    <property type="entry name" value="A55692"/>
</dbReference>
<dbReference type="RefSeq" id="NP_418658.1">
    <property type="nucleotide sequence ID" value="NC_000913.3"/>
</dbReference>
<dbReference type="RefSeq" id="WP_001106233.1">
    <property type="nucleotide sequence ID" value="NZ_LN832404.1"/>
</dbReference>
<dbReference type="SMR" id="P0A9N8"/>
<dbReference type="BioGRID" id="4259317">
    <property type="interactions" value="16"/>
</dbReference>
<dbReference type="BioGRID" id="853046">
    <property type="interactions" value="3"/>
</dbReference>
<dbReference type="ComplexPortal" id="CPX-3821">
    <property type="entry name" value="nrdDG class III anaerobic ribonucleotide reductase activation complex"/>
</dbReference>
<dbReference type="DIP" id="DIP-48068N"/>
<dbReference type="FunCoup" id="P0A9N8">
    <property type="interactions" value="233"/>
</dbReference>
<dbReference type="IntAct" id="P0A9N8">
    <property type="interactions" value="4"/>
</dbReference>
<dbReference type="STRING" id="511145.b4237"/>
<dbReference type="jPOST" id="P0A9N8"/>
<dbReference type="PaxDb" id="511145-b4237"/>
<dbReference type="DNASU" id="948757"/>
<dbReference type="EnsemblBacteria" id="AAC77194">
    <property type="protein sequence ID" value="AAC77194"/>
    <property type="gene ID" value="b4237"/>
</dbReference>
<dbReference type="GeneID" id="86861364"/>
<dbReference type="GeneID" id="948757"/>
<dbReference type="KEGG" id="ecj:JW4196"/>
<dbReference type="KEGG" id="eco:b4237"/>
<dbReference type="KEGG" id="ecoc:C3026_22870"/>
<dbReference type="PATRIC" id="fig|1411691.4.peg.2465"/>
<dbReference type="EchoBASE" id="EB2414"/>
<dbReference type="eggNOG" id="COG0602">
    <property type="taxonomic scope" value="Bacteria"/>
</dbReference>
<dbReference type="HOGENOM" id="CLU_089926_2_1_6"/>
<dbReference type="InParanoid" id="P0A9N8"/>
<dbReference type="OMA" id="NDTRIPR"/>
<dbReference type="OrthoDB" id="9782387at2"/>
<dbReference type="PhylomeDB" id="P0A9N8"/>
<dbReference type="BioCyc" id="EcoCyc:RNTRACTIV-MONOMER"/>
<dbReference type="BioCyc" id="MetaCyc:RNTRACTIV-MONOMER"/>
<dbReference type="PRO" id="PR:P0A9N8"/>
<dbReference type="Proteomes" id="UP000000625">
    <property type="component" value="Chromosome"/>
</dbReference>
<dbReference type="GO" id="GO:0031250">
    <property type="term" value="C:anaerobic ribonucleoside-triphosphate reductase complex"/>
    <property type="evidence" value="ECO:0000315"/>
    <property type="project" value="EcoliWiki"/>
</dbReference>
<dbReference type="GO" id="GO:0051539">
    <property type="term" value="F:4 iron, 4 sulfur cluster binding"/>
    <property type="evidence" value="ECO:0000314"/>
    <property type="project" value="EcoCyc"/>
</dbReference>
<dbReference type="GO" id="GO:0043365">
    <property type="term" value="F:[formate-C-acetyltransferase]-activating enzyme activity"/>
    <property type="evidence" value="ECO:0007669"/>
    <property type="project" value="InterPro"/>
</dbReference>
<dbReference type="GO" id="GO:0051536">
    <property type="term" value="F:iron-sulfur cluster binding"/>
    <property type="evidence" value="ECO:0000314"/>
    <property type="project" value="EcoliWiki"/>
</dbReference>
<dbReference type="GO" id="GO:0046872">
    <property type="term" value="F:metal ion binding"/>
    <property type="evidence" value="ECO:0007669"/>
    <property type="project" value="UniProtKB-KW"/>
</dbReference>
<dbReference type="GO" id="GO:0009265">
    <property type="term" value="P:2'-deoxyribonucleotide biosynthetic process"/>
    <property type="evidence" value="ECO:0000303"/>
    <property type="project" value="ComplexPortal"/>
</dbReference>
<dbReference type="GO" id="GO:0015949">
    <property type="term" value="P:nucleobase-containing small molecule interconversion"/>
    <property type="evidence" value="ECO:0000315"/>
    <property type="project" value="EcoliWiki"/>
</dbReference>
<dbReference type="CDD" id="cd01335">
    <property type="entry name" value="Radical_SAM"/>
    <property type="match status" value="1"/>
</dbReference>
<dbReference type="FunFam" id="3.20.20.70:FF:000087">
    <property type="entry name" value="Anaerobic ribonucleoside-triphosphate reductase-activating protein"/>
    <property type="match status" value="1"/>
</dbReference>
<dbReference type="Gene3D" id="3.20.20.70">
    <property type="entry name" value="Aldolase class I"/>
    <property type="match status" value="1"/>
</dbReference>
<dbReference type="InterPro" id="IPR013785">
    <property type="entry name" value="Aldolase_TIM"/>
</dbReference>
<dbReference type="InterPro" id="IPR012837">
    <property type="entry name" value="NrdG"/>
</dbReference>
<dbReference type="InterPro" id="IPR034457">
    <property type="entry name" value="Organic_radical-activating"/>
</dbReference>
<dbReference type="InterPro" id="IPR001989">
    <property type="entry name" value="Radical_activat_CS"/>
</dbReference>
<dbReference type="InterPro" id="IPR007197">
    <property type="entry name" value="rSAM"/>
</dbReference>
<dbReference type="NCBIfam" id="TIGR02491">
    <property type="entry name" value="NrdG"/>
    <property type="match status" value="1"/>
</dbReference>
<dbReference type="NCBIfam" id="NF008335">
    <property type="entry name" value="PRK11121.1"/>
    <property type="match status" value="1"/>
</dbReference>
<dbReference type="PANTHER" id="PTHR30352:SF2">
    <property type="entry name" value="ANAEROBIC RIBONUCLEOSIDE-TRIPHOSPHATE REDUCTASE-ACTIVATING PROTEIN"/>
    <property type="match status" value="1"/>
</dbReference>
<dbReference type="PANTHER" id="PTHR30352">
    <property type="entry name" value="PYRUVATE FORMATE-LYASE-ACTIVATING ENZYME"/>
    <property type="match status" value="1"/>
</dbReference>
<dbReference type="Pfam" id="PF13353">
    <property type="entry name" value="Fer4_12"/>
    <property type="match status" value="1"/>
</dbReference>
<dbReference type="PIRSF" id="PIRSF000368">
    <property type="entry name" value="NrdG"/>
    <property type="match status" value="1"/>
</dbReference>
<dbReference type="SFLD" id="SFLDF00299">
    <property type="entry name" value="anaerobic_ribonucleoside-triph"/>
    <property type="match status" value="1"/>
</dbReference>
<dbReference type="SFLD" id="SFLDS00029">
    <property type="entry name" value="Radical_SAM"/>
    <property type="match status" value="1"/>
</dbReference>
<dbReference type="SUPFAM" id="SSF102114">
    <property type="entry name" value="Radical SAM enzymes"/>
    <property type="match status" value="1"/>
</dbReference>
<dbReference type="PROSITE" id="PS01087">
    <property type="entry name" value="RADICAL_ACTIVATING"/>
    <property type="match status" value="1"/>
</dbReference>
<reference key="1">
    <citation type="journal article" date="1995" name="J. Biol. Chem.">
        <title>Generation of the glycyl radical of the anaerobic Escherichia coli ribonucleotide reductase requires a specific activating enzyme.</title>
        <authorList>
            <person name="Sun X."/>
            <person name="Eliasson R."/>
            <person name="Pontis E."/>
            <person name="Andersson J."/>
            <person name="Buist G."/>
            <person name="Sjoeberg B.-M."/>
            <person name="Reichard P."/>
        </authorList>
    </citation>
    <scope>NUCLEOTIDE SEQUENCE [GENOMIC DNA]</scope>
    <scope>FUNCTION</scope>
    <scope>IRON-SULFUR CLUSTER</scope>
    <scope>SUBUNIT</scope>
    <source>
        <strain>K12</strain>
    </source>
</reference>
<reference key="2">
    <citation type="journal article" date="1995" name="Nucleic Acids Res.">
        <title>Analysis of the Escherichia coli genome VI: DNA sequence of the region from 92.8 through 100 minutes.</title>
        <authorList>
            <person name="Burland V.D."/>
            <person name="Plunkett G. III"/>
            <person name="Sofia H.J."/>
            <person name="Daniels D.L."/>
            <person name="Blattner F.R."/>
        </authorList>
    </citation>
    <scope>NUCLEOTIDE SEQUENCE [LARGE SCALE GENOMIC DNA]</scope>
    <source>
        <strain>K12 / MG1655 / ATCC 47076</strain>
    </source>
</reference>
<reference key="3">
    <citation type="journal article" date="1997" name="Science">
        <title>The complete genome sequence of Escherichia coli K-12.</title>
        <authorList>
            <person name="Blattner F.R."/>
            <person name="Plunkett G. III"/>
            <person name="Bloch C.A."/>
            <person name="Perna N.T."/>
            <person name="Burland V."/>
            <person name="Riley M."/>
            <person name="Collado-Vides J."/>
            <person name="Glasner J.D."/>
            <person name="Rode C.K."/>
            <person name="Mayhew G.F."/>
            <person name="Gregor J."/>
            <person name="Davis N.W."/>
            <person name="Kirkpatrick H.A."/>
            <person name="Goeden M.A."/>
            <person name="Rose D.J."/>
            <person name="Mau B."/>
            <person name="Shao Y."/>
        </authorList>
    </citation>
    <scope>NUCLEOTIDE SEQUENCE [LARGE SCALE GENOMIC DNA]</scope>
    <source>
        <strain>K12 / MG1655 / ATCC 47076</strain>
    </source>
</reference>
<reference key="4">
    <citation type="journal article" date="2006" name="Mol. Syst. Biol.">
        <title>Highly accurate genome sequences of Escherichia coli K-12 strains MG1655 and W3110.</title>
        <authorList>
            <person name="Hayashi K."/>
            <person name="Morooka N."/>
            <person name="Yamamoto Y."/>
            <person name="Fujita K."/>
            <person name="Isono K."/>
            <person name="Choi S."/>
            <person name="Ohtsubo E."/>
            <person name="Baba T."/>
            <person name="Wanner B.L."/>
            <person name="Mori H."/>
            <person name="Horiuchi T."/>
        </authorList>
    </citation>
    <scope>NUCLEOTIDE SEQUENCE [LARGE SCALE GENOMIC DNA]</scope>
    <source>
        <strain>K12 / W3110 / ATCC 27325 / DSM 5911</strain>
    </source>
</reference>
<reference key="5">
    <citation type="journal article" date="1992" name="J. Biol. Chem.">
        <title>Characterization of components of the anaerobic ribonucleotide reductase system from Escherichia coli.</title>
        <authorList>
            <person name="Eliasson R."/>
            <person name="Pontis E."/>
            <person name="Fontecave M."/>
            <person name="Gerez C."/>
            <person name="Harder J."/>
            <person name="Joernvall H."/>
            <person name="Krook M."/>
            <person name="Reichard P."/>
        </authorList>
    </citation>
    <scope>FUNCTION</scope>
    <scope>SUBUNIT</scope>
</reference>
<reference key="6">
    <citation type="journal article" date="1996" name="J. Biol. Chem.">
        <title>The anaerobic Escherichia coli ribonucleotide reductase. Subunit structure and iron sulfur center.</title>
        <authorList>
            <person name="Ollagnier S."/>
            <person name="Mulliez E."/>
            <person name="Gaillard J."/>
            <person name="Eliasson R."/>
            <person name="Fontecave M."/>
            <person name="Reichard P."/>
        </authorList>
    </citation>
    <scope>SUBUNIT</scope>
    <scope>INTERACTION WITH NRDD</scope>
    <scope>IRON-SULFUR CLUSTER</scope>
</reference>
<reference key="7">
    <citation type="journal article" date="1997" name="J. Biol. Chem.">
        <title>Activation of the anaerobic ribonucleotide reductase from Escherichia coli. The essential role of the iron-sulfur center for S-adenosylmethionine reduction.</title>
        <authorList>
            <person name="Ollagnier S."/>
            <person name="Mulliez E."/>
            <person name="Schmidt P.P."/>
            <person name="Eliasson R."/>
            <person name="Gaillard J."/>
            <person name="Deronzier C."/>
            <person name="Bergman T."/>
            <person name="Graeslund A."/>
            <person name="Reichard P."/>
            <person name="Fontecave M."/>
        </authorList>
    </citation>
    <scope>FUNCTION</scope>
    <scope>CATALYTIC ACTIVITY</scope>
    <scope>IRON-SULFUR CLUSTER</scope>
</reference>
<reference key="8">
    <citation type="journal article" date="2000" name="J. Biol. Chem.">
        <title>The activating component of the anaerobic ribonucleotide reductase from Escherichia coli. An iron-sulfur center with only three cysteines.</title>
        <authorList>
            <person name="Tamarit J."/>
            <person name="Gerez C."/>
            <person name="Meier C."/>
            <person name="Mulliez E."/>
            <person name="Trautwein A."/>
            <person name="Fontecave M."/>
        </authorList>
    </citation>
    <scope>IRON-SULFUR LIGANDS</scope>
    <scope>MUTAGENESIS OF CYS-19; CYS-26; CYS-30; CYS-33 AND CYS-96</scope>
</reference>
<reference key="9">
    <citation type="journal article" date="2009" name="Mol. Cell">
        <title>Hydroxyurea induces hydroxyl radical-mediated cell death in Escherichia coli.</title>
        <authorList>
            <person name="Davies B.W."/>
            <person name="Kohanski M.A."/>
            <person name="Simmons L.A."/>
            <person name="Winkler J.A."/>
            <person name="Collins J.J."/>
            <person name="Walker G.C."/>
        </authorList>
    </citation>
    <scope>INDUCTION BY HYDROXYUREA</scope>
    <source>
        <strain>K12 / MC4100 / ATCC 35695 / DSM 6574</strain>
    </source>
</reference>
<comment type="function">
    <text evidence="3 5 7">Activation of anaerobic ribonucleoside-triphosphate reductase under anaerobic conditions by generation of an organic free radical, using S-adenosylmethionine and reduced flavodoxin as cosubstrates to produce 5'-deoxy-adenosine.</text>
</comment>
<comment type="catalytic activity">
    <reaction evidence="7">
        <text>glycyl-[protein] + reduced [flavodoxin] + S-adenosyl-L-methionine = glycin-2-yl radical-[protein] + semiquinone [flavodoxin] + 5'-deoxyadenosine + L-methionine + H(+)</text>
        <dbReference type="Rhea" id="RHEA:61976"/>
        <dbReference type="Rhea" id="RHEA-COMP:10622"/>
        <dbReference type="Rhea" id="RHEA-COMP:14480"/>
        <dbReference type="Rhea" id="RHEA-COMP:15993"/>
        <dbReference type="Rhea" id="RHEA-COMP:15994"/>
        <dbReference type="ChEBI" id="CHEBI:15378"/>
        <dbReference type="ChEBI" id="CHEBI:17319"/>
        <dbReference type="ChEBI" id="CHEBI:29947"/>
        <dbReference type="ChEBI" id="CHEBI:32722"/>
        <dbReference type="ChEBI" id="CHEBI:57618"/>
        <dbReference type="ChEBI" id="CHEBI:57844"/>
        <dbReference type="ChEBI" id="CHEBI:59789"/>
        <dbReference type="ChEBI" id="CHEBI:140311"/>
    </reaction>
</comment>
<comment type="cofactor">
    <cofactor evidence="2 5 6 7">
        <name>[4Fe-4S] cluster</name>
        <dbReference type="ChEBI" id="CHEBI:49883"/>
    </cofactor>
    <text evidence="1">Binds 1 [4Fe-4S] cluster. The cluster is coordinated with 3 cysteines and an exchangeable S-adenosyl-L-methionine.</text>
</comment>
<comment type="subunit">
    <text evidence="3 5 6">Monomer or homodimer (PubMed:1460049, PubMed:7852304, PubMed:8621608). Forms a tetramer composed of two NrdD and two NrdG subunits (PubMed:8621608).</text>
</comment>
<comment type="interaction">
    <interactant intactId="EBI-1135026">
        <id>P0A9N8</id>
    </interactant>
    <interactant intactId="EBI-370011">
        <id>P28903</id>
        <label>nrdD</label>
    </interactant>
    <organismsDiffer>false</organismsDiffer>
    <experiments>3</experiments>
</comment>
<comment type="subcellular location">
    <subcellularLocation>
        <location>Cytoplasm</location>
    </subcellularLocation>
</comment>
<comment type="induction">
    <text evidence="4">Induced 2-fold by hydroxyurea.</text>
</comment>
<comment type="similarity">
    <text evidence="8">Belongs to the organic radical-activating enzymes family.</text>
</comment>
<organism>
    <name type="scientific">Escherichia coli (strain K12)</name>
    <dbReference type="NCBI Taxonomy" id="83333"/>
    <lineage>
        <taxon>Bacteria</taxon>
        <taxon>Pseudomonadati</taxon>
        <taxon>Pseudomonadota</taxon>
        <taxon>Gammaproteobacteria</taxon>
        <taxon>Enterobacterales</taxon>
        <taxon>Enterobacteriaceae</taxon>
        <taxon>Escherichia</taxon>
    </lineage>
</organism>
<accession>P0A9N8</accession>
<accession>P39329</accession>
<accession>Q2M670</accession>
<keyword id="KW-0004">4Fe-4S</keyword>
<keyword id="KW-0963">Cytoplasm</keyword>
<keyword id="KW-0408">Iron</keyword>
<keyword id="KW-0411">Iron-sulfur</keyword>
<keyword id="KW-0479">Metal-binding</keyword>
<keyword id="KW-0560">Oxidoreductase</keyword>
<keyword id="KW-1185">Reference proteome</keyword>
<keyword id="KW-0949">S-adenosyl-L-methionine</keyword>